<name>GLGA_CERS4</name>
<sequence>METARGRVLSVASECVPLLKTGGLADVVGALPGALAAEGWEMRVLMPCYRPLKWRLEEMEEVFAEEDLFGGPGRVMAGEVAGRKMLLLDAPHLYDREGGPYAGPDGDWGDNAQRFAALSWIGARIAREGLGDGWRPDVVHAHDWQAGFTPAYMNYWGSGGASSVLTVHNIAFQGWAPASLLSALRLPPQEFHPAALEYYGGLSSLKAGLVSADHITTVSPTYACELMRPEFGMGLQGVIAQRAGQVTGILNGVDTDIWSPEVEERPYDAESLKAKAENRAVLSGAFKLSVPGPLAILVSRLTYQKGIDLIPEVLPDFIAAGGGLAVLGTGDAPLEAAMRELEVRFPGRVGVRIGYDEGLSHLMFAGGDAVLVPSRFEPCGLTQMYGLRYGAIPVVALTGGLADTIINANPAAMAAGCATGLTFHPTEPPAFAEALRRLIHLYADPAAWETVQRNAMRHPVGWETSAAAYAALYRELVA</sequence>
<proteinExistence type="inferred from homology"/>
<dbReference type="EC" id="2.4.1.21" evidence="1"/>
<dbReference type="EMBL" id="AF181035">
    <property type="protein sequence ID" value="AAD53959.1"/>
    <property type="status" value="ALT_INIT"/>
    <property type="molecule type" value="Genomic_DNA"/>
</dbReference>
<dbReference type="EMBL" id="CP000143">
    <property type="protein sequence ID" value="ABA79046.2"/>
    <property type="molecule type" value="Genomic_DNA"/>
</dbReference>
<dbReference type="RefSeq" id="WP_023003625.1">
    <property type="nucleotide sequence ID" value="NZ_CP030271.1"/>
</dbReference>
<dbReference type="RefSeq" id="YP_352947.2">
    <property type="nucleotide sequence ID" value="NC_007493.2"/>
</dbReference>
<dbReference type="SMR" id="Q9RNH6"/>
<dbReference type="STRING" id="272943.RSP_2885"/>
<dbReference type="CAZy" id="GT5">
    <property type="family name" value="Glycosyltransferase Family 5"/>
</dbReference>
<dbReference type="EnsemblBacteria" id="ABA79046">
    <property type="protein sequence ID" value="ABA79046"/>
    <property type="gene ID" value="RSP_2885"/>
</dbReference>
<dbReference type="GeneID" id="3720625"/>
<dbReference type="KEGG" id="rsp:RSP_2885"/>
<dbReference type="PATRIC" id="fig|272943.9.peg.1821"/>
<dbReference type="eggNOG" id="COG0297">
    <property type="taxonomic scope" value="Bacteria"/>
</dbReference>
<dbReference type="OrthoDB" id="9808590at2"/>
<dbReference type="UniPathway" id="UPA00164"/>
<dbReference type="Proteomes" id="UP000002703">
    <property type="component" value="Chromosome 1"/>
</dbReference>
<dbReference type="GO" id="GO:0005829">
    <property type="term" value="C:cytosol"/>
    <property type="evidence" value="ECO:0007669"/>
    <property type="project" value="TreeGrafter"/>
</dbReference>
<dbReference type="GO" id="GO:0009011">
    <property type="term" value="F:alpha-1,4-glucan glucosyltransferase (ADP-glucose donor) activity"/>
    <property type="evidence" value="ECO:0007669"/>
    <property type="project" value="UniProtKB-UniRule"/>
</dbReference>
<dbReference type="GO" id="GO:0004373">
    <property type="term" value="F:alpha-1,4-glucan glucosyltransferase (UDP-glucose donor) activity"/>
    <property type="evidence" value="ECO:0007669"/>
    <property type="project" value="InterPro"/>
</dbReference>
<dbReference type="GO" id="GO:0005978">
    <property type="term" value="P:glycogen biosynthetic process"/>
    <property type="evidence" value="ECO:0007669"/>
    <property type="project" value="UniProtKB-UniRule"/>
</dbReference>
<dbReference type="CDD" id="cd03791">
    <property type="entry name" value="GT5_Glycogen_synthase_DULL1-like"/>
    <property type="match status" value="1"/>
</dbReference>
<dbReference type="Gene3D" id="3.40.50.2000">
    <property type="entry name" value="Glycogen Phosphorylase B"/>
    <property type="match status" value="2"/>
</dbReference>
<dbReference type="HAMAP" id="MF_00484">
    <property type="entry name" value="Glycogen_synth"/>
    <property type="match status" value="1"/>
</dbReference>
<dbReference type="InterPro" id="IPR011835">
    <property type="entry name" value="GS/SS"/>
</dbReference>
<dbReference type="InterPro" id="IPR013534">
    <property type="entry name" value="Starch_synth_cat_dom"/>
</dbReference>
<dbReference type="NCBIfam" id="TIGR02095">
    <property type="entry name" value="glgA"/>
    <property type="match status" value="1"/>
</dbReference>
<dbReference type="NCBIfam" id="NF001899">
    <property type="entry name" value="PRK00654.1-2"/>
    <property type="match status" value="1"/>
</dbReference>
<dbReference type="PANTHER" id="PTHR45825:SF11">
    <property type="entry name" value="ALPHA AMYLASE DOMAIN-CONTAINING PROTEIN"/>
    <property type="match status" value="1"/>
</dbReference>
<dbReference type="PANTHER" id="PTHR45825">
    <property type="entry name" value="GRANULE-BOUND STARCH SYNTHASE 1, CHLOROPLASTIC/AMYLOPLASTIC"/>
    <property type="match status" value="1"/>
</dbReference>
<dbReference type="Pfam" id="PF13692">
    <property type="entry name" value="Glyco_trans_1_4"/>
    <property type="match status" value="1"/>
</dbReference>
<dbReference type="Pfam" id="PF08323">
    <property type="entry name" value="Glyco_transf_5"/>
    <property type="match status" value="1"/>
</dbReference>
<dbReference type="SUPFAM" id="SSF53756">
    <property type="entry name" value="UDP-Glycosyltransferase/glycogen phosphorylase"/>
    <property type="match status" value="1"/>
</dbReference>
<keyword id="KW-0320">Glycogen biosynthesis</keyword>
<keyword id="KW-0328">Glycosyltransferase</keyword>
<keyword id="KW-1185">Reference proteome</keyword>
<keyword id="KW-0808">Transferase</keyword>
<comment type="function">
    <text evidence="1">Synthesizes alpha-1,4-glucan chains using ADP-glucose.</text>
</comment>
<comment type="catalytic activity">
    <reaction evidence="1">
        <text>[(1-&gt;4)-alpha-D-glucosyl](n) + ADP-alpha-D-glucose = [(1-&gt;4)-alpha-D-glucosyl](n+1) + ADP + H(+)</text>
        <dbReference type="Rhea" id="RHEA:18189"/>
        <dbReference type="Rhea" id="RHEA-COMP:9584"/>
        <dbReference type="Rhea" id="RHEA-COMP:9587"/>
        <dbReference type="ChEBI" id="CHEBI:15378"/>
        <dbReference type="ChEBI" id="CHEBI:15444"/>
        <dbReference type="ChEBI" id="CHEBI:57498"/>
        <dbReference type="ChEBI" id="CHEBI:456216"/>
        <dbReference type="EC" id="2.4.1.21"/>
    </reaction>
</comment>
<comment type="pathway">
    <text evidence="1">Glycan biosynthesis; glycogen biosynthesis.</text>
</comment>
<comment type="similarity">
    <text evidence="1">Belongs to the glycosyltransferase 1 family. Bacterial/plant glycogen synthase subfamily.</text>
</comment>
<comment type="sequence caution" evidence="2">
    <conflict type="erroneous initiation">
        <sequence resource="EMBL-CDS" id="AAD53959"/>
    </conflict>
    <text>Extended N-terminus.</text>
</comment>
<evidence type="ECO:0000255" key="1">
    <source>
        <dbReference type="HAMAP-Rule" id="MF_00484"/>
    </source>
</evidence>
<evidence type="ECO:0000305" key="2"/>
<protein>
    <recommendedName>
        <fullName evidence="1">Glycogen synthase</fullName>
        <ecNumber evidence="1">2.4.1.21</ecNumber>
    </recommendedName>
    <alternativeName>
        <fullName evidence="1">Starch [bacterial glycogen] synthase</fullName>
    </alternativeName>
</protein>
<accession>Q9RNH6</accession>
<accession>Q3J2D8</accession>
<feature type="chain" id="PRO_0000188642" description="Glycogen synthase">
    <location>
        <begin position="1"/>
        <end position="478"/>
    </location>
</feature>
<feature type="binding site" evidence="1">
    <location>
        <position position="20"/>
    </location>
    <ligand>
        <name>ADP-alpha-D-glucose</name>
        <dbReference type="ChEBI" id="CHEBI:57498"/>
    </ligand>
</feature>
<feature type="sequence conflict" description="In Ref. 1; AAD53959." evidence="2" ref="1">
    <original>EGG</original>
    <variation>GR</variation>
    <location>
        <begin position="97"/>
        <end position="99"/>
    </location>
</feature>
<feature type="sequence conflict" description="In Ref. 1; AAD53959." evidence="2" ref="1">
    <original>RIAREGLGD</original>
    <variation>GSRARGSGT</variation>
    <location>
        <begin position="124"/>
        <end position="132"/>
    </location>
</feature>
<feature type="sequence conflict" description="In Ref. 1; AAD53959." evidence="2" ref="1">
    <original>E</original>
    <variation>K</variation>
    <location>
        <position position="190"/>
    </location>
</feature>
<reference key="1">
    <citation type="submission" date="1999-08" db="EMBL/GenBank/DDBJ databases">
        <title>Cloning, sequencing, and expression of the ADP-glucose pyrophosphorylase gene (glgC) from Rhodobacter sphaeroides 2.4.1.</title>
        <authorList>
            <person name="Igarashi R.Y."/>
            <person name="Meyer C.R."/>
        </authorList>
    </citation>
    <scope>NUCLEOTIDE SEQUENCE [GENOMIC DNA]</scope>
</reference>
<reference key="2">
    <citation type="submission" date="2005-09" db="EMBL/GenBank/DDBJ databases">
        <title>Complete sequence of chromosome 1 of Rhodobacter sphaeroides 2.4.1.</title>
        <authorList>
            <person name="Copeland A."/>
            <person name="Lucas S."/>
            <person name="Lapidus A."/>
            <person name="Barry K."/>
            <person name="Detter J.C."/>
            <person name="Glavina T."/>
            <person name="Hammon N."/>
            <person name="Israni S."/>
            <person name="Pitluck S."/>
            <person name="Richardson P."/>
            <person name="Mackenzie C."/>
            <person name="Choudhary M."/>
            <person name="Larimer F."/>
            <person name="Hauser L.J."/>
            <person name="Land M."/>
            <person name="Donohue T.J."/>
            <person name="Kaplan S."/>
        </authorList>
    </citation>
    <scope>NUCLEOTIDE SEQUENCE [LARGE SCALE GENOMIC DNA]</scope>
    <source>
        <strain>ATCC 17023 / DSM 158 / JCM 6121 / CCUG 31486 / LMG 2827 / NBRC 12203 / NCIMB 8253 / ATH 2.4.1.</strain>
    </source>
</reference>
<gene>
    <name evidence="1" type="primary">glgA</name>
    <name type="ordered locus">RHOS4_14780</name>
    <name type="ORF">RSP_2885</name>
</gene>
<organism>
    <name type="scientific">Cereibacter sphaeroides (strain ATCC 17023 / DSM 158 / JCM 6121 / CCUG 31486 / LMG 2827 / NBRC 12203 / NCIMB 8253 / ATH 2.4.1.)</name>
    <name type="common">Rhodobacter sphaeroides</name>
    <dbReference type="NCBI Taxonomy" id="272943"/>
    <lineage>
        <taxon>Bacteria</taxon>
        <taxon>Pseudomonadati</taxon>
        <taxon>Pseudomonadota</taxon>
        <taxon>Alphaproteobacteria</taxon>
        <taxon>Rhodobacterales</taxon>
        <taxon>Paracoccaceae</taxon>
        <taxon>Cereibacter</taxon>
    </lineage>
</organism>